<organism>
    <name type="scientific">Rhizobium meliloti (strain 1021)</name>
    <name type="common">Ensifer meliloti</name>
    <name type="synonym">Sinorhizobium meliloti</name>
    <dbReference type="NCBI Taxonomy" id="266834"/>
    <lineage>
        <taxon>Bacteria</taxon>
        <taxon>Pseudomonadati</taxon>
        <taxon>Pseudomonadota</taxon>
        <taxon>Alphaproteobacteria</taxon>
        <taxon>Hyphomicrobiales</taxon>
        <taxon>Rhizobiaceae</taxon>
        <taxon>Sinorhizobium/Ensifer group</taxon>
        <taxon>Sinorhizobium</taxon>
    </lineage>
</organism>
<keyword id="KW-0963">Cytoplasm</keyword>
<keyword id="KW-0378">Hydrolase</keyword>
<keyword id="KW-0546">Nucleotide metabolism</keyword>
<keyword id="KW-1185">Reference proteome</keyword>
<feature type="chain" id="PRO_0000123055" description="dTTP/UTP pyrophosphatase">
    <location>
        <begin position="1"/>
        <end position="206"/>
    </location>
</feature>
<feature type="active site" description="Proton acceptor" evidence="1">
    <location>
        <position position="79"/>
    </location>
</feature>
<feature type="site" description="Important for substrate specificity" evidence="1">
    <location>
        <position position="15"/>
    </location>
</feature>
<feature type="site" description="Important for substrate specificity" evidence="1">
    <location>
        <position position="80"/>
    </location>
</feature>
<feature type="site" description="Important for substrate specificity" evidence="1">
    <location>
        <position position="163"/>
    </location>
</feature>
<evidence type="ECO:0000255" key="1">
    <source>
        <dbReference type="HAMAP-Rule" id="MF_00528"/>
    </source>
</evidence>
<dbReference type="EC" id="3.6.1.9" evidence="1"/>
<dbReference type="EMBL" id="AL591688">
    <property type="protein sequence ID" value="CAC45187.1"/>
    <property type="molecule type" value="Genomic_DNA"/>
</dbReference>
<dbReference type="RefSeq" id="NP_384721.1">
    <property type="nucleotide sequence ID" value="NC_003047.1"/>
</dbReference>
<dbReference type="RefSeq" id="WP_004435951.1">
    <property type="nucleotide sequence ID" value="NC_003047.1"/>
</dbReference>
<dbReference type="SMR" id="Q92S22"/>
<dbReference type="EnsemblBacteria" id="CAC45187">
    <property type="protein sequence ID" value="CAC45187"/>
    <property type="gene ID" value="SMc02311"/>
</dbReference>
<dbReference type="KEGG" id="sme:SMc02311"/>
<dbReference type="PATRIC" id="fig|266834.11.peg.1988"/>
<dbReference type="eggNOG" id="COG0424">
    <property type="taxonomic scope" value="Bacteria"/>
</dbReference>
<dbReference type="HOGENOM" id="CLU_040416_2_0_5"/>
<dbReference type="OrthoDB" id="9807767at2"/>
<dbReference type="Proteomes" id="UP000001976">
    <property type="component" value="Chromosome"/>
</dbReference>
<dbReference type="GO" id="GO:0005737">
    <property type="term" value="C:cytoplasm"/>
    <property type="evidence" value="ECO:0007669"/>
    <property type="project" value="UniProtKB-SubCell"/>
</dbReference>
<dbReference type="GO" id="GO:0036218">
    <property type="term" value="F:dTTP diphosphatase activity"/>
    <property type="evidence" value="ECO:0007669"/>
    <property type="project" value="RHEA"/>
</dbReference>
<dbReference type="GO" id="GO:0036221">
    <property type="term" value="F:UTP diphosphatase activity"/>
    <property type="evidence" value="ECO:0007669"/>
    <property type="project" value="RHEA"/>
</dbReference>
<dbReference type="GO" id="GO:0009117">
    <property type="term" value="P:nucleotide metabolic process"/>
    <property type="evidence" value="ECO:0007669"/>
    <property type="project" value="UniProtKB-KW"/>
</dbReference>
<dbReference type="CDD" id="cd00555">
    <property type="entry name" value="Maf"/>
    <property type="match status" value="1"/>
</dbReference>
<dbReference type="Gene3D" id="3.90.950.10">
    <property type="match status" value="1"/>
</dbReference>
<dbReference type="HAMAP" id="MF_00528">
    <property type="entry name" value="Maf"/>
    <property type="match status" value="1"/>
</dbReference>
<dbReference type="InterPro" id="IPR029001">
    <property type="entry name" value="ITPase-like_fam"/>
</dbReference>
<dbReference type="InterPro" id="IPR003697">
    <property type="entry name" value="Maf-like"/>
</dbReference>
<dbReference type="NCBIfam" id="TIGR00172">
    <property type="entry name" value="maf"/>
    <property type="match status" value="1"/>
</dbReference>
<dbReference type="NCBIfam" id="NF002401">
    <property type="entry name" value="PRK01441.1"/>
    <property type="match status" value="1"/>
</dbReference>
<dbReference type="PANTHER" id="PTHR43213">
    <property type="entry name" value="BIFUNCTIONAL DTTP/UTP PYROPHOSPHATASE/METHYLTRANSFERASE PROTEIN-RELATED"/>
    <property type="match status" value="1"/>
</dbReference>
<dbReference type="PANTHER" id="PTHR43213:SF5">
    <property type="entry name" value="BIFUNCTIONAL DTTP_UTP PYROPHOSPHATASE_METHYLTRANSFERASE PROTEIN-RELATED"/>
    <property type="match status" value="1"/>
</dbReference>
<dbReference type="Pfam" id="PF02545">
    <property type="entry name" value="Maf"/>
    <property type="match status" value="1"/>
</dbReference>
<dbReference type="PIRSF" id="PIRSF006305">
    <property type="entry name" value="Maf"/>
    <property type="match status" value="1"/>
</dbReference>
<dbReference type="SUPFAM" id="SSF52972">
    <property type="entry name" value="ITPase-like"/>
    <property type="match status" value="1"/>
</dbReference>
<reference key="1">
    <citation type="journal article" date="2001" name="Proc. Natl. Acad. Sci. U.S.A.">
        <title>Analysis of the chromosome sequence of the legume symbiont Sinorhizobium meliloti strain 1021.</title>
        <authorList>
            <person name="Capela D."/>
            <person name="Barloy-Hubler F."/>
            <person name="Gouzy J."/>
            <person name="Bothe G."/>
            <person name="Ampe F."/>
            <person name="Batut J."/>
            <person name="Boistard P."/>
            <person name="Becker A."/>
            <person name="Boutry M."/>
            <person name="Cadieu E."/>
            <person name="Dreano S."/>
            <person name="Gloux S."/>
            <person name="Godrie T."/>
            <person name="Goffeau A."/>
            <person name="Kahn D."/>
            <person name="Kiss E."/>
            <person name="Lelaure V."/>
            <person name="Masuy D."/>
            <person name="Pohl T."/>
            <person name="Portetelle D."/>
            <person name="Puehler A."/>
            <person name="Purnelle B."/>
            <person name="Ramsperger U."/>
            <person name="Renard C."/>
            <person name="Thebault P."/>
            <person name="Vandenbol M."/>
            <person name="Weidner S."/>
            <person name="Galibert F."/>
        </authorList>
    </citation>
    <scope>NUCLEOTIDE SEQUENCE [LARGE SCALE GENOMIC DNA]</scope>
    <source>
        <strain>1021</strain>
    </source>
</reference>
<reference key="2">
    <citation type="journal article" date="2001" name="Science">
        <title>The composite genome of the legume symbiont Sinorhizobium meliloti.</title>
        <authorList>
            <person name="Galibert F."/>
            <person name="Finan T.M."/>
            <person name="Long S.R."/>
            <person name="Puehler A."/>
            <person name="Abola P."/>
            <person name="Ampe F."/>
            <person name="Barloy-Hubler F."/>
            <person name="Barnett M.J."/>
            <person name="Becker A."/>
            <person name="Boistard P."/>
            <person name="Bothe G."/>
            <person name="Boutry M."/>
            <person name="Bowser L."/>
            <person name="Buhrmester J."/>
            <person name="Cadieu E."/>
            <person name="Capela D."/>
            <person name="Chain P."/>
            <person name="Cowie A."/>
            <person name="Davis R.W."/>
            <person name="Dreano S."/>
            <person name="Federspiel N.A."/>
            <person name="Fisher R.F."/>
            <person name="Gloux S."/>
            <person name="Godrie T."/>
            <person name="Goffeau A."/>
            <person name="Golding B."/>
            <person name="Gouzy J."/>
            <person name="Gurjal M."/>
            <person name="Hernandez-Lucas I."/>
            <person name="Hong A."/>
            <person name="Huizar L."/>
            <person name="Hyman R.W."/>
            <person name="Jones T."/>
            <person name="Kahn D."/>
            <person name="Kahn M.L."/>
            <person name="Kalman S."/>
            <person name="Keating D.H."/>
            <person name="Kiss E."/>
            <person name="Komp C."/>
            <person name="Lelaure V."/>
            <person name="Masuy D."/>
            <person name="Palm C."/>
            <person name="Peck M.C."/>
            <person name="Pohl T.M."/>
            <person name="Portetelle D."/>
            <person name="Purnelle B."/>
            <person name="Ramsperger U."/>
            <person name="Surzycki R."/>
            <person name="Thebault P."/>
            <person name="Vandenbol M."/>
            <person name="Vorhoelter F.J."/>
            <person name="Weidner S."/>
            <person name="Wells D.H."/>
            <person name="Wong K."/>
            <person name="Yeh K.-C."/>
            <person name="Batut J."/>
        </authorList>
    </citation>
    <scope>NUCLEOTIDE SEQUENCE [LARGE SCALE GENOMIC DNA]</scope>
    <source>
        <strain>1021</strain>
    </source>
</reference>
<protein>
    <recommendedName>
        <fullName evidence="1">dTTP/UTP pyrophosphatase</fullName>
        <shortName evidence="1">dTTPase/UTPase</shortName>
        <ecNumber evidence="1">3.6.1.9</ecNumber>
    </recommendedName>
    <alternativeName>
        <fullName evidence="1">Nucleoside triphosphate pyrophosphatase</fullName>
    </alternativeName>
    <alternativeName>
        <fullName evidence="1">Nucleotide pyrophosphatase</fullName>
        <shortName evidence="1">Nucleotide PPase</shortName>
    </alternativeName>
</protein>
<name>NTPPA_RHIME</name>
<sequence length="206" mass="22365">MAVTKKLILASGSPRRVELLAQAGIEPARLMPMDLDETPKRSEHPRSLARRLSAEKAKAALSAITGDPAWDGSYILAADTVVCVGRRILPKPELVSEASSALHLLSGRSHRVYTGICLVTPDRTLRQKVIDTKVRFKRLSTLDIESYLASGQWRGKAGGYGIQGIAGGFVVKLVGSYTNVVGLPLYETVNLLVGEGYDVHDRWLEG</sequence>
<gene>
    <name type="ordered locus">R00615</name>
    <name type="ORF">SMc02311</name>
</gene>
<proteinExistence type="inferred from homology"/>
<comment type="function">
    <text evidence="1">Nucleoside triphosphate pyrophosphatase that hydrolyzes dTTP and UTP. May have a dual role in cell division arrest and in preventing the incorporation of modified nucleotides into cellular nucleic acids.</text>
</comment>
<comment type="catalytic activity">
    <reaction evidence="1">
        <text>dTTP + H2O = dTMP + diphosphate + H(+)</text>
        <dbReference type="Rhea" id="RHEA:28534"/>
        <dbReference type="ChEBI" id="CHEBI:15377"/>
        <dbReference type="ChEBI" id="CHEBI:15378"/>
        <dbReference type="ChEBI" id="CHEBI:33019"/>
        <dbReference type="ChEBI" id="CHEBI:37568"/>
        <dbReference type="ChEBI" id="CHEBI:63528"/>
        <dbReference type="EC" id="3.6.1.9"/>
    </reaction>
</comment>
<comment type="catalytic activity">
    <reaction evidence="1">
        <text>UTP + H2O = UMP + diphosphate + H(+)</text>
        <dbReference type="Rhea" id="RHEA:29395"/>
        <dbReference type="ChEBI" id="CHEBI:15377"/>
        <dbReference type="ChEBI" id="CHEBI:15378"/>
        <dbReference type="ChEBI" id="CHEBI:33019"/>
        <dbReference type="ChEBI" id="CHEBI:46398"/>
        <dbReference type="ChEBI" id="CHEBI:57865"/>
        <dbReference type="EC" id="3.6.1.9"/>
    </reaction>
</comment>
<comment type="cofactor">
    <cofactor evidence="1">
        <name>a divalent metal cation</name>
        <dbReference type="ChEBI" id="CHEBI:60240"/>
    </cofactor>
</comment>
<comment type="subcellular location">
    <subcellularLocation>
        <location evidence="1">Cytoplasm</location>
    </subcellularLocation>
</comment>
<comment type="similarity">
    <text evidence="1">Belongs to the Maf family. YhdE subfamily.</text>
</comment>
<accession>Q92S22</accession>